<gene>
    <name evidence="1" type="primary">rplR</name>
    <name type="ordered locus">DNO_1259</name>
</gene>
<reference key="1">
    <citation type="journal article" date="2007" name="Nat. Biotechnol.">
        <title>Genome sequence and identification of candidate vaccine antigens from the animal pathogen Dichelobacter nodosus.</title>
        <authorList>
            <person name="Myers G.S.A."/>
            <person name="Parker D."/>
            <person name="Al-Hasani K."/>
            <person name="Kennan R.M."/>
            <person name="Seemann T."/>
            <person name="Ren Q."/>
            <person name="Badger J.H."/>
            <person name="Selengut J.D."/>
            <person name="Deboy R.T."/>
            <person name="Tettelin H."/>
            <person name="Boyce J.D."/>
            <person name="McCarl V.P."/>
            <person name="Han X."/>
            <person name="Nelson W.C."/>
            <person name="Madupu R."/>
            <person name="Mohamoud Y."/>
            <person name="Holley T."/>
            <person name="Fedorova N."/>
            <person name="Khouri H."/>
            <person name="Bottomley S.P."/>
            <person name="Whittington R.J."/>
            <person name="Adler B."/>
            <person name="Songer J.G."/>
            <person name="Rood J.I."/>
            <person name="Paulsen I.T."/>
        </authorList>
    </citation>
    <scope>NUCLEOTIDE SEQUENCE [LARGE SCALE GENOMIC DNA]</scope>
    <source>
        <strain>VCS1703A</strain>
    </source>
</reference>
<comment type="function">
    <text evidence="1">This is one of the proteins that bind and probably mediate the attachment of the 5S RNA into the large ribosomal subunit, where it forms part of the central protuberance.</text>
</comment>
<comment type="subunit">
    <text evidence="1">Part of the 50S ribosomal subunit; part of the 5S rRNA/L5/L18/L25 subcomplex. Contacts the 5S and 23S rRNAs.</text>
</comment>
<comment type="similarity">
    <text evidence="1">Belongs to the universal ribosomal protein uL18 family.</text>
</comment>
<sequence>MNQKKINRIRRGKRTRLNIRESGKPSLIVNKTPRHIYAQIISGEGNKVLASISTLNKEVADAVHYTGNIESATKVGQMIAEKAKSLGIESLAFDRNGFRYHGRVKALADAARAAGLQF</sequence>
<evidence type="ECO:0000255" key="1">
    <source>
        <dbReference type="HAMAP-Rule" id="MF_01337"/>
    </source>
</evidence>
<evidence type="ECO:0000305" key="2"/>
<keyword id="KW-1185">Reference proteome</keyword>
<keyword id="KW-0687">Ribonucleoprotein</keyword>
<keyword id="KW-0689">Ribosomal protein</keyword>
<keyword id="KW-0694">RNA-binding</keyword>
<keyword id="KW-0699">rRNA-binding</keyword>
<name>RL18_DICNV</name>
<organism>
    <name type="scientific">Dichelobacter nodosus (strain VCS1703A)</name>
    <dbReference type="NCBI Taxonomy" id="246195"/>
    <lineage>
        <taxon>Bacteria</taxon>
        <taxon>Pseudomonadati</taxon>
        <taxon>Pseudomonadota</taxon>
        <taxon>Gammaproteobacteria</taxon>
        <taxon>Cardiobacteriales</taxon>
        <taxon>Cardiobacteriaceae</taxon>
        <taxon>Dichelobacter</taxon>
    </lineage>
</organism>
<accession>A5EXA2</accession>
<protein>
    <recommendedName>
        <fullName evidence="1">Large ribosomal subunit protein uL18</fullName>
    </recommendedName>
    <alternativeName>
        <fullName evidence="2">50S ribosomal protein L18</fullName>
    </alternativeName>
</protein>
<feature type="chain" id="PRO_1000053021" description="Large ribosomal subunit protein uL18">
    <location>
        <begin position="1"/>
        <end position="118"/>
    </location>
</feature>
<proteinExistence type="inferred from homology"/>
<dbReference type="EMBL" id="CP000513">
    <property type="protein sequence ID" value="ABQ13867.1"/>
    <property type="molecule type" value="Genomic_DNA"/>
</dbReference>
<dbReference type="RefSeq" id="WP_012031554.1">
    <property type="nucleotide sequence ID" value="NC_009446.1"/>
</dbReference>
<dbReference type="SMR" id="A5EXA2"/>
<dbReference type="STRING" id="246195.DNO_1259"/>
<dbReference type="KEGG" id="dno:DNO_1259"/>
<dbReference type="eggNOG" id="COG0256">
    <property type="taxonomic scope" value="Bacteria"/>
</dbReference>
<dbReference type="HOGENOM" id="CLU_098841_0_1_6"/>
<dbReference type="OrthoDB" id="9810939at2"/>
<dbReference type="Proteomes" id="UP000000248">
    <property type="component" value="Chromosome"/>
</dbReference>
<dbReference type="GO" id="GO:0022625">
    <property type="term" value="C:cytosolic large ribosomal subunit"/>
    <property type="evidence" value="ECO:0007669"/>
    <property type="project" value="TreeGrafter"/>
</dbReference>
<dbReference type="GO" id="GO:0008097">
    <property type="term" value="F:5S rRNA binding"/>
    <property type="evidence" value="ECO:0007669"/>
    <property type="project" value="TreeGrafter"/>
</dbReference>
<dbReference type="GO" id="GO:0003735">
    <property type="term" value="F:structural constituent of ribosome"/>
    <property type="evidence" value="ECO:0007669"/>
    <property type="project" value="InterPro"/>
</dbReference>
<dbReference type="GO" id="GO:0006412">
    <property type="term" value="P:translation"/>
    <property type="evidence" value="ECO:0007669"/>
    <property type="project" value="UniProtKB-UniRule"/>
</dbReference>
<dbReference type="CDD" id="cd00432">
    <property type="entry name" value="Ribosomal_L18_L5e"/>
    <property type="match status" value="1"/>
</dbReference>
<dbReference type="FunFam" id="3.30.420.100:FF:000001">
    <property type="entry name" value="50S ribosomal protein L18"/>
    <property type="match status" value="1"/>
</dbReference>
<dbReference type="Gene3D" id="3.30.420.100">
    <property type="match status" value="1"/>
</dbReference>
<dbReference type="HAMAP" id="MF_01337_B">
    <property type="entry name" value="Ribosomal_uL18_B"/>
    <property type="match status" value="1"/>
</dbReference>
<dbReference type="InterPro" id="IPR004389">
    <property type="entry name" value="Ribosomal_uL18_bac-type"/>
</dbReference>
<dbReference type="InterPro" id="IPR005484">
    <property type="entry name" value="Ribosomal_uL18_bac/euk"/>
</dbReference>
<dbReference type="NCBIfam" id="TIGR00060">
    <property type="entry name" value="L18_bact"/>
    <property type="match status" value="1"/>
</dbReference>
<dbReference type="PANTHER" id="PTHR12899">
    <property type="entry name" value="39S RIBOSOMAL PROTEIN L18, MITOCHONDRIAL"/>
    <property type="match status" value="1"/>
</dbReference>
<dbReference type="PANTHER" id="PTHR12899:SF3">
    <property type="entry name" value="LARGE RIBOSOMAL SUBUNIT PROTEIN UL18M"/>
    <property type="match status" value="1"/>
</dbReference>
<dbReference type="Pfam" id="PF00861">
    <property type="entry name" value="Ribosomal_L18p"/>
    <property type="match status" value="1"/>
</dbReference>
<dbReference type="SUPFAM" id="SSF53137">
    <property type="entry name" value="Translational machinery components"/>
    <property type="match status" value="1"/>
</dbReference>